<reference key="1">
    <citation type="journal article" date="1999" name="Mol. Phylogenet. Evol.">
        <title>Phylogenetic relationships in the bovid subfamily Antilopinae based on mitochondrial DNA sequences.</title>
        <authorList>
            <person name="Rebholz W.E.R."/>
            <person name="Harley E.H."/>
        </authorList>
    </citation>
    <scope>NUCLEOTIDE SEQUENCE [GENOMIC DNA]</scope>
</reference>
<accession>O47706</accession>
<keyword id="KW-0472">Membrane</keyword>
<keyword id="KW-0496">Mitochondrion</keyword>
<keyword id="KW-0999">Mitochondrion inner membrane</keyword>
<keyword id="KW-1278">Translocase</keyword>
<keyword id="KW-0812">Transmembrane</keyword>
<keyword id="KW-1133">Transmembrane helix</keyword>
<name>COX3_EUDTH</name>
<gene>
    <name type="primary">MT-CO3</name>
    <name type="synonym">COIII</name>
    <name type="synonym">COXIII</name>
    <name type="synonym">MTCO3</name>
</gene>
<evidence type="ECO:0000250" key="1">
    <source>
        <dbReference type="UniProtKB" id="P00415"/>
    </source>
</evidence>
<evidence type="ECO:0000250" key="2">
    <source>
        <dbReference type="UniProtKB" id="P00420"/>
    </source>
</evidence>
<evidence type="ECO:0000305" key="3"/>
<comment type="function">
    <text evidence="2">Component of the cytochrome c oxidase, the last enzyme in the mitochondrial electron transport chain which drives oxidative phosphorylation. The respiratory chain contains 3 multisubunit complexes succinate dehydrogenase (complex II, CII), ubiquinol-cytochrome c oxidoreductase (cytochrome b-c1 complex, complex III, CIII) and cytochrome c oxidase (complex IV, CIV), that cooperate to transfer electrons derived from NADH and succinate to molecular oxygen, creating an electrochemical gradient over the inner membrane that drives transmembrane transport and the ATP synthase. Cytochrome c oxidase is the component of the respiratory chain that catalyzes the reduction of oxygen to water. Electrons originating from reduced cytochrome c in the intermembrane space (IMS) are transferred via the dinuclear copper A center (CU(A)) of subunit 2 and heme A of subunit 1 to the active site in subunit 1, a binuclear center (BNC) formed by heme A3 and copper B (CU(B)). The BNC reduces molecular oxygen to 2 water molecules using 4 electrons from cytochrome c in the IMS and 4 protons from the mitochondrial matrix.</text>
</comment>
<comment type="catalytic activity">
    <reaction evidence="2">
        <text>4 Fe(II)-[cytochrome c] + O2 + 8 H(+)(in) = 4 Fe(III)-[cytochrome c] + 2 H2O + 4 H(+)(out)</text>
        <dbReference type="Rhea" id="RHEA:11436"/>
        <dbReference type="Rhea" id="RHEA-COMP:10350"/>
        <dbReference type="Rhea" id="RHEA-COMP:14399"/>
        <dbReference type="ChEBI" id="CHEBI:15377"/>
        <dbReference type="ChEBI" id="CHEBI:15378"/>
        <dbReference type="ChEBI" id="CHEBI:15379"/>
        <dbReference type="ChEBI" id="CHEBI:29033"/>
        <dbReference type="ChEBI" id="CHEBI:29034"/>
        <dbReference type="EC" id="7.1.1.9"/>
    </reaction>
    <physiologicalReaction direction="left-to-right" evidence="2">
        <dbReference type="Rhea" id="RHEA:11437"/>
    </physiologicalReaction>
</comment>
<comment type="subunit">
    <text evidence="1">Component of the cytochrome c oxidase (complex IV, CIV), a multisubunit enzyme composed of 14 subunits. The complex is composed of a catalytic core of 3 subunits MT-CO1, MT-CO2 and MT-CO3, encoded in the mitochondrial DNA, and 11 supernumerary subunits COX4I, COX5A, COX5B, COX6A, COX6B, COX6C, COX7A, COX7B, COX7C, COX8 and NDUFA4, which are encoded in the nuclear genome. The complex exists as a monomer or a dimer and forms supercomplexes (SCs) in the inner mitochondrial membrane with NADH-ubiquinone oxidoreductase (complex I, CI) and ubiquinol-cytochrome c oxidoreductase (cytochrome b-c1 complex, complex III, CIII), resulting in different assemblies (supercomplex SCI(1)III(2)IV(1) and megacomplex MCI(2)III(2)IV(2)).</text>
</comment>
<comment type="subcellular location">
    <subcellularLocation>
        <location evidence="1">Mitochondrion inner membrane</location>
        <topology evidence="1">Multi-pass membrane protein</topology>
    </subcellularLocation>
</comment>
<comment type="similarity">
    <text evidence="3">Belongs to the cytochrome c oxidase subunit 3 family.</text>
</comment>
<protein>
    <recommendedName>
        <fullName>Cytochrome c oxidase subunit 3</fullName>
        <ecNumber>7.1.1.9</ecNumber>
    </recommendedName>
    <alternativeName>
        <fullName>Cytochrome c oxidase polypeptide III</fullName>
    </alternativeName>
</protein>
<geneLocation type="mitochondrion"/>
<organism>
    <name type="scientific">Eudorcas thomsonii</name>
    <name type="common">Thomson's gazelle</name>
    <name type="synonym">Gazella thomsonii</name>
    <dbReference type="NCBI Taxonomy" id="69308"/>
    <lineage>
        <taxon>Eukaryota</taxon>
        <taxon>Metazoa</taxon>
        <taxon>Chordata</taxon>
        <taxon>Craniata</taxon>
        <taxon>Vertebrata</taxon>
        <taxon>Euteleostomi</taxon>
        <taxon>Mammalia</taxon>
        <taxon>Eutheria</taxon>
        <taxon>Laurasiatheria</taxon>
        <taxon>Artiodactyla</taxon>
        <taxon>Ruminantia</taxon>
        <taxon>Pecora</taxon>
        <taxon>Bovidae</taxon>
        <taxon>Antilopinae</taxon>
        <taxon>Eudorcas</taxon>
    </lineage>
</organism>
<dbReference type="EC" id="7.1.1.9"/>
<dbReference type="EMBL" id="AF030473">
    <property type="protein sequence ID" value="AAB93612.1"/>
    <property type="molecule type" value="Genomic_DNA"/>
</dbReference>
<dbReference type="SMR" id="O47706"/>
<dbReference type="GO" id="GO:0005743">
    <property type="term" value="C:mitochondrial inner membrane"/>
    <property type="evidence" value="ECO:0007669"/>
    <property type="project" value="UniProtKB-SubCell"/>
</dbReference>
<dbReference type="GO" id="GO:0045277">
    <property type="term" value="C:respiratory chain complex IV"/>
    <property type="evidence" value="ECO:0000250"/>
    <property type="project" value="UniProtKB"/>
</dbReference>
<dbReference type="GO" id="GO:0004129">
    <property type="term" value="F:cytochrome-c oxidase activity"/>
    <property type="evidence" value="ECO:0007669"/>
    <property type="project" value="UniProtKB-EC"/>
</dbReference>
<dbReference type="GO" id="GO:0006123">
    <property type="term" value="P:mitochondrial electron transport, cytochrome c to oxygen"/>
    <property type="evidence" value="ECO:0007669"/>
    <property type="project" value="TreeGrafter"/>
</dbReference>
<dbReference type="GO" id="GO:0008535">
    <property type="term" value="P:respiratory chain complex IV assembly"/>
    <property type="evidence" value="ECO:0000250"/>
    <property type="project" value="UniProtKB"/>
</dbReference>
<dbReference type="CDD" id="cd01665">
    <property type="entry name" value="Cyt_c_Oxidase_III"/>
    <property type="match status" value="1"/>
</dbReference>
<dbReference type="FunFam" id="1.10.287.70:FF:000048">
    <property type="entry name" value="Cytochrome c oxidase subunit 3"/>
    <property type="match status" value="1"/>
</dbReference>
<dbReference type="FunFam" id="1.20.120.80:FF:000002">
    <property type="entry name" value="Cytochrome c oxidase subunit 3"/>
    <property type="match status" value="1"/>
</dbReference>
<dbReference type="Gene3D" id="1.10.287.70">
    <property type="match status" value="1"/>
</dbReference>
<dbReference type="Gene3D" id="1.20.120.80">
    <property type="entry name" value="Cytochrome c oxidase, subunit III, four-helix bundle"/>
    <property type="match status" value="1"/>
</dbReference>
<dbReference type="InterPro" id="IPR024791">
    <property type="entry name" value="Cyt_c/ubiquinol_Oxase_su3"/>
</dbReference>
<dbReference type="InterPro" id="IPR033945">
    <property type="entry name" value="Cyt_c_oxase_su3_dom"/>
</dbReference>
<dbReference type="InterPro" id="IPR000298">
    <property type="entry name" value="Cyt_c_oxidase-like_su3"/>
</dbReference>
<dbReference type="InterPro" id="IPR035973">
    <property type="entry name" value="Cyt_c_oxidase_su3-like_sf"/>
</dbReference>
<dbReference type="InterPro" id="IPR013833">
    <property type="entry name" value="Cyt_c_oxidase_su3_a-hlx"/>
</dbReference>
<dbReference type="PANTHER" id="PTHR11403:SF7">
    <property type="entry name" value="CYTOCHROME C OXIDASE SUBUNIT 3"/>
    <property type="match status" value="1"/>
</dbReference>
<dbReference type="PANTHER" id="PTHR11403">
    <property type="entry name" value="CYTOCHROME C OXIDASE SUBUNIT III"/>
    <property type="match status" value="1"/>
</dbReference>
<dbReference type="Pfam" id="PF00510">
    <property type="entry name" value="COX3"/>
    <property type="match status" value="1"/>
</dbReference>
<dbReference type="SUPFAM" id="SSF81452">
    <property type="entry name" value="Cytochrome c oxidase subunit III-like"/>
    <property type="match status" value="1"/>
</dbReference>
<dbReference type="PROSITE" id="PS50253">
    <property type="entry name" value="COX3"/>
    <property type="match status" value="1"/>
</dbReference>
<feature type="chain" id="PRO_0000183787" description="Cytochrome c oxidase subunit 3">
    <location>
        <begin position="1"/>
        <end position="261"/>
    </location>
</feature>
<feature type="topological domain" description="Mitochondrial matrix" evidence="1">
    <location>
        <begin position="1"/>
        <end position="15"/>
    </location>
</feature>
<feature type="transmembrane region" description="Helical; Name=I" evidence="1">
    <location>
        <begin position="16"/>
        <end position="34"/>
    </location>
</feature>
<feature type="topological domain" description="Mitochondrial intermembrane" evidence="1">
    <location>
        <begin position="35"/>
        <end position="40"/>
    </location>
</feature>
<feature type="transmembrane region" description="Helical; Name=II" evidence="1">
    <location>
        <begin position="41"/>
        <end position="66"/>
    </location>
</feature>
<feature type="topological domain" description="Mitochondrial matrix" evidence="1">
    <location>
        <begin position="67"/>
        <end position="72"/>
    </location>
</feature>
<feature type="transmembrane region" description="Helical; Name=III" evidence="1">
    <location>
        <begin position="73"/>
        <end position="105"/>
    </location>
</feature>
<feature type="topological domain" description="Mitochondrial intermembrane" evidence="1">
    <location>
        <begin position="106"/>
        <end position="128"/>
    </location>
</feature>
<feature type="transmembrane region" description="Helical; Name=IV" evidence="1">
    <location>
        <begin position="129"/>
        <end position="152"/>
    </location>
</feature>
<feature type="topological domain" description="Mitochondrial matrix" evidence="1">
    <location>
        <begin position="153"/>
        <end position="155"/>
    </location>
</feature>
<feature type="transmembrane region" description="Helical; Name=V" evidence="1">
    <location>
        <begin position="156"/>
        <end position="183"/>
    </location>
</feature>
<feature type="topological domain" description="Mitochondrial intermembrane" evidence="1">
    <location>
        <begin position="184"/>
        <end position="190"/>
    </location>
</feature>
<feature type="transmembrane region" description="Helical; Name=VI" evidence="1">
    <location>
        <begin position="191"/>
        <end position="223"/>
    </location>
</feature>
<feature type="topological domain" description="Mitochondrial matrix" evidence="1">
    <location>
        <begin position="224"/>
        <end position="232"/>
    </location>
</feature>
<feature type="transmembrane region" description="Helical; Name=VII" evidence="1">
    <location>
        <begin position="233"/>
        <end position="256"/>
    </location>
</feature>
<feature type="topological domain" description="Mitochondrial intermembrane" evidence="1">
    <location>
        <begin position="257"/>
        <end position="261"/>
    </location>
</feature>
<proteinExistence type="inferred from homology"/>
<sequence>MTHQTHAYHMVNPSPWPLTGALSALLMTSGLIMWFHFNSTILLMLGLTTNMLTMYQWWRDVIRESTFQGHHTPNVQKGLRYGMILFIISEVLFFTGFFWAFYHSSLAPTPELGGCWPPTGIHPLNPLEVPLLNTSVLLASGVSITWAHHSLMEGNRNHMLQALFITIALGVYFTLLQASEYYEAPFTISDGVYGSTFFVATGFHGLHVIIGSTFLIVCFFRQLKFHFTSNHHFGFEAAAWYWHFVDVVWLFLYVSIYWWGS</sequence>